<evidence type="ECO:0000255" key="1">
    <source>
        <dbReference type="PROSITE-ProRule" id="PRU00448"/>
    </source>
</evidence>
<organism>
    <name type="scientific">Homo sapiens</name>
    <name type="common">Human</name>
    <dbReference type="NCBI Taxonomy" id="9606"/>
    <lineage>
        <taxon>Eukaryota</taxon>
        <taxon>Metazoa</taxon>
        <taxon>Chordata</taxon>
        <taxon>Craniata</taxon>
        <taxon>Vertebrata</taxon>
        <taxon>Euteleostomi</taxon>
        <taxon>Mammalia</taxon>
        <taxon>Eutheria</taxon>
        <taxon>Euarchontoglires</taxon>
        <taxon>Primates</taxon>
        <taxon>Haplorrhini</taxon>
        <taxon>Catarrhini</taxon>
        <taxon>Hominidae</taxon>
        <taxon>Homo</taxon>
    </lineage>
</organism>
<keyword id="KW-1267">Proteomics identification</keyword>
<keyword id="KW-1185">Reference proteome</keyword>
<feature type="chain" id="PRO_0000340680" description="EF-hand calcium-binding domain-containing protein 10">
    <location>
        <begin position="1"/>
        <end position="127"/>
    </location>
</feature>
<feature type="domain" description="EF-hand" evidence="1">
    <location>
        <begin position="63"/>
        <end position="98"/>
    </location>
</feature>
<gene>
    <name type="primary">EFCAB10</name>
</gene>
<dbReference type="EMBL" id="AC073073">
    <property type="status" value="NOT_ANNOTATED_CDS"/>
    <property type="molecule type" value="Genomic_DNA"/>
</dbReference>
<dbReference type="EMBL" id="BC105284">
    <property type="status" value="NOT_ANNOTATED_CDS"/>
    <property type="molecule type" value="mRNA"/>
</dbReference>
<dbReference type="CCDS" id="CCDS87537.1"/>
<dbReference type="RefSeq" id="NP_001342455.1">
    <property type="nucleotide sequence ID" value="NM_001355526.2"/>
</dbReference>
<dbReference type="SMR" id="A6NFE3"/>
<dbReference type="FunCoup" id="A6NFE3">
    <property type="interactions" value="9"/>
</dbReference>
<dbReference type="STRING" id="9606.ENSP00000417841"/>
<dbReference type="BioMuta" id="EFCAB10"/>
<dbReference type="MassIVE" id="A6NFE3"/>
<dbReference type="PaxDb" id="9606-ENSP00000418678"/>
<dbReference type="PeptideAtlas" id="A6NFE3"/>
<dbReference type="ProteomicsDB" id="1046"/>
<dbReference type="Antibodypedia" id="9327">
    <property type="antibodies" value="19 antibodies from 8 providers"/>
</dbReference>
<dbReference type="Ensembl" id="ENST00000480514.6">
    <property type="protein sequence ID" value="ENSP00000418678.1"/>
    <property type="gene ID" value="ENSG00000185055.11"/>
</dbReference>
<dbReference type="GeneID" id="100130771"/>
<dbReference type="MANE-Select" id="ENST00000480514.6">
    <property type="protein sequence ID" value="ENSP00000418678.1"/>
    <property type="RefSeq nucleotide sequence ID" value="NM_001355526.2"/>
    <property type="RefSeq protein sequence ID" value="NP_001342455.1"/>
</dbReference>
<dbReference type="UCSC" id="uc003vdb.4">
    <property type="organism name" value="human"/>
</dbReference>
<dbReference type="AGR" id="HGNC:34531"/>
<dbReference type="GeneCards" id="EFCAB10"/>
<dbReference type="HGNC" id="HGNC:34531">
    <property type="gene designation" value="EFCAB10"/>
</dbReference>
<dbReference type="HPA" id="ENSG00000185055">
    <property type="expression patterns" value="Group enriched (choroid plexus, fallopian tube, testis)"/>
</dbReference>
<dbReference type="neXtProt" id="NX_A6NFE3"/>
<dbReference type="OpenTargets" id="ENSG00000185055"/>
<dbReference type="VEuPathDB" id="HostDB:ENSG00000185055"/>
<dbReference type="eggNOG" id="ENOG502S6BT">
    <property type="taxonomic scope" value="Eukaryota"/>
</dbReference>
<dbReference type="GeneTree" id="ENSGT00940000154487"/>
<dbReference type="InParanoid" id="A6NFE3"/>
<dbReference type="OMA" id="SMLLFYR"/>
<dbReference type="OrthoDB" id="10260455at2759"/>
<dbReference type="PAN-GO" id="A6NFE3">
    <property type="GO annotations" value="0 GO annotations based on evolutionary models"/>
</dbReference>
<dbReference type="PhylomeDB" id="A6NFE3"/>
<dbReference type="SignaLink" id="A6NFE3"/>
<dbReference type="ChiTaRS" id="EFCAB10">
    <property type="organism name" value="human"/>
</dbReference>
<dbReference type="Pharos" id="A6NFE3">
    <property type="development level" value="Tdark"/>
</dbReference>
<dbReference type="PRO" id="PR:A6NFE3"/>
<dbReference type="Proteomes" id="UP000005640">
    <property type="component" value="Chromosome 7"/>
</dbReference>
<dbReference type="RNAct" id="A6NFE3">
    <property type="molecule type" value="protein"/>
</dbReference>
<dbReference type="Bgee" id="ENSG00000185055">
    <property type="expression patterns" value="Expressed in right uterine tube and 97 other cell types or tissues"/>
</dbReference>
<dbReference type="ExpressionAtlas" id="A6NFE3">
    <property type="expression patterns" value="baseline and differential"/>
</dbReference>
<dbReference type="GO" id="GO:0005509">
    <property type="term" value="F:calcium ion binding"/>
    <property type="evidence" value="ECO:0007669"/>
    <property type="project" value="InterPro"/>
</dbReference>
<dbReference type="CDD" id="cd22976">
    <property type="entry name" value="DD_EFCAB10"/>
    <property type="match status" value="1"/>
</dbReference>
<dbReference type="Gene3D" id="1.10.238.10">
    <property type="entry name" value="EF-hand"/>
    <property type="match status" value="1"/>
</dbReference>
<dbReference type="InterPro" id="IPR049760">
    <property type="entry name" value="DD_EFCAB10"/>
</dbReference>
<dbReference type="InterPro" id="IPR011992">
    <property type="entry name" value="EF-hand-dom_pair"/>
</dbReference>
<dbReference type="InterPro" id="IPR056587">
    <property type="entry name" value="EF_EFCAB10_C"/>
</dbReference>
<dbReference type="InterPro" id="IPR002048">
    <property type="entry name" value="EF_hand_dom"/>
</dbReference>
<dbReference type="InterPro" id="IPR039879">
    <property type="entry name" value="EFC10"/>
</dbReference>
<dbReference type="PANTHER" id="PTHR21847">
    <property type="entry name" value="EF-HAND CALCIUM-BINDING DOMAIN-CONTAINING PROTEIN 10"/>
    <property type="match status" value="1"/>
</dbReference>
<dbReference type="PANTHER" id="PTHR21847:SF1">
    <property type="entry name" value="EF-HAND CALCIUM-BINDING DOMAIN-CONTAINING PROTEIN 10"/>
    <property type="match status" value="1"/>
</dbReference>
<dbReference type="Pfam" id="PF24548">
    <property type="entry name" value="EF_EFCAB10_C"/>
    <property type="match status" value="1"/>
</dbReference>
<dbReference type="SUPFAM" id="SSF47391">
    <property type="entry name" value="Dimerization-anchoring domain of cAMP-dependent PK regulatory subunit"/>
    <property type="match status" value="1"/>
</dbReference>
<dbReference type="SUPFAM" id="SSF47473">
    <property type="entry name" value="EF-hand"/>
    <property type="match status" value="1"/>
</dbReference>
<dbReference type="PROSITE" id="PS50222">
    <property type="entry name" value="EF_HAND_2"/>
    <property type="match status" value="1"/>
</dbReference>
<name>EFC10_HUMAN</name>
<sequence length="127" mass="14721">METSSRELQAAEYLEKHQIKEVVSYLTSALLFFRPEKPKEYLISLLERLRIAKVTGVAFPFFMDNSNIVAMFEMMDSSGRGTISFVQYKEALKTLGLCTEDEDLQDDGHKITLDKFKEEVNKRMKEI</sequence>
<reference key="1">
    <citation type="journal article" date="2003" name="Nature">
        <title>The DNA sequence of human chromosome 7.</title>
        <authorList>
            <person name="Hillier L.W."/>
            <person name="Fulton R.S."/>
            <person name="Fulton L.A."/>
            <person name="Graves T.A."/>
            <person name="Pepin K.H."/>
            <person name="Wagner-McPherson C."/>
            <person name="Layman D."/>
            <person name="Maas J."/>
            <person name="Jaeger S."/>
            <person name="Walker R."/>
            <person name="Wylie K."/>
            <person name="Sekhon M."/>
            <person name="Becker M.C."/>
            <person name="O'Laughlin M.D."/>
            <person name="Schaller M.E."/>
            <person name="Fewell G.A."/>
            <person name="Delehaunty K.D."/>
            <person name="Miner T.L."/>
            <person name="Nash W.E."/>
            <person name="Cordes M."/>
            <person name="Du H."/>
            <person name="Sun H."/>
            <person name="Edwards J."/>
            <person name="Bradshaw-Cordum H."/>
            <person name="Ali J."/>
            <person name="Andrews S."/>
            <person name="Isak A."/>
            <person name="Vanbrunt A."/>
            <person name="Nguyen C."/>
            <person name="Du F."/>
            <person name="Lamar B."/>
            <person name="Courtney L."/>
            <person name="Kalicki J."/>
            <person name="Ozersky P."/>
            <person name="Bielicki L."/>
            <person name="Scott K."/>
            <person name="Holmes A."/>
            <person name="Harkins R."/>
            <person name="Harris A."/>
            <person name="Strong C.M."/>
            <person name="Hou S."/>
            <person name="Tomlinson C."/>
            <person name="Dauphin-Kohlberg S."/>
            <person name="Kozlowicz-Reilly A."/>
            <person name="Leonard S."/>
            <person name="Rohlfing T."/>
            <person name="Rock S.M."/>
            <person name="Tin-Wollam A.-M."/>
            <person name="Abbott A."/>
            <person name="Minx P."/>
            <person name="Maupin R."/>
            <person name="Strowmatt C."/>
            <person name="Latreille P."/>
            <person name="Miller N."/>
            <person name="Johnson D."/>
            <person name="Murray J."/>
            <person name="Woessner J.P."/>
            <person name="Wendl M.C."/>
            <person name="Yang S.-P."/>
            <person name="Schultz B.R."/>
            <person name="Wallis J.W."/>
            <person name="Spieth J."/>
            <person name="Bieri T.A."/>
            <person name="Nelson J.O."/>
            <person name="Berkowicz N."/>
            <person name="Wohldmann P.E."/>
            <person name="Cook L.L."/>
            <person name="Hickenbotham M.T."/>
            <person name="Eldred J."/>
            <person name="Williams D."/>
            <person name="Bedell J.A."/>
            <person name="Mardis E.R."/>
            <person name="Clifton S.W."/>
            <person name="Chissoe S.L."/>
            <person name="Marra M.A."/>
            <person name="Raymond C."/>
            <person name="Haugen E."/>
            <person name="Gillett W."/>
            <person name="Zhou Y."/>
            <person name="James R."/>
            <person name="Phelps K."/>
            <person name="Iadanoto S."/>
            <person name="Bubb K."/>
            <person name="Simms E."/>
            <person name="Levy R."/>
            <person name="Clendenning J."/>
            <person name="Kaul R."/>
            <person name="Kent W.J."/>
            <person name="Furey T.S."/>
            <person name="Baertsch R.A."/>
            <person name="Brent M.R."/>
            <person name="Keibler E."/>
            <person name="Flicek P."/>
            <person name="Bork P."/>
            <person name="Suyama M."/>
            <person name="Bailey J.A."/>
            <person name="Portnoy M.E."/>
            <person name="Torrents D."/>
            <person name="Chinwalla A.T."/>
            <person name="Gish W.R."/>
            <person name="Eddy S.R."/>
            <person name="McPherson J.D."/>
            <person name="Olson M.V."/>
            <person name="Eichler E.E."/>
            <person name="Green E.D."/>
            <person name="Waterston R.H."/>
            <person name="Wilson R.K."/>
        </authorList>
    </citation>
    <scope>NUCLEOTIDE SEQUENCE [LARGE SCALE GENOMIC DNA]</scope>
</reference>
<reference key="2">
    <citation type="journal article" date="2004" name="Genome Res.">
        <title>The status, quality, and expansion of the NIH full-length cDNA project: the Mammalian Gene Collection (MGC).</title>
        <authorList>
            <consortium name="The MGC Project Team"/>
        </authorList>
    </citation>
    <scope>NUCLEOTIDE SEQUENCE [LARGE SCALE MRNA]</scope>
    <source>
        <tissue>Testis</tissue>
    </source>
</reference>
<proteinExistence type="evidence at protein level"/>
<accession>A6NFE3</accession>
<protein>
    <recommendedName>
        <fullName>EF-hand calcium-binding domain-containing protein 10</fullName>
    </recommendedName>
</protein>